<dbReference type="EC" id="3.4.23.-"/>
<dbReference type="EC" id="2.7.7.49"/>
<dbReference type="EC" id="2.7.7.7"/>
<dbReference type="EC" id="3.1.26.4"/>
<dbReference type="EC" id="2.7.7.-" evidence="5"/>
<dbReference type="EC" id="3.1.-.-" evidence="5"/>
<dbReference type="EMBL" id="DQ241301">
    <property type="protein sequence ID" value="ABB83225.1"/>
    <property type="molecule type" value="Genomic_RNA"/>
</dbReference>
<dbReference type="PDB" id="3V1O">
    <property type="method" value="X-ray"/>
    <property type="resolution" value="1.88 A"/>
    <property type="chains" value="A=1154-1328"/>
</dbReference>
<dbReference type="PDB" id="3V1Q">
    <property type="method" value="X-ray"/>
    <property type="resolution" value="2.00 A"/>
    <property type="chains" value="A=1155-1328"/>
</dbReference>
<dbReference type="PDB" id="3V1R">
    <property type="method" value="X-ray"/>
    <property type="resolution" value="2.80 A"/>
    <property type="chains" value="A=1154-1328"/>
</dbReference>
<dbReference type="PDBsum" id="3V1O"/>
<dbReference type="PDBsum" id="3V1Q"/>
<dbReference type="PDBsum" id="3V1R"/>
<dbReference type="SMR" id="Q2F7J3"/>
<dbReference type="EvolutionaryTrace" id="Q2F7J3"/>
<dbReference type="Proteomes" id="UP000008601">
    <property type="component" value="Genome"/>
</dbReference>
<dbReference type="GO" id="GO:0020002">
    <property type="term" value="C:host cell plasma membrane"/>
    <property type="evidence" value="ECO:0007669"/>
    <property type="project" value="UniProtKB-SubCell"/>
</dbReference>
<dbReference type="GO" id="GO:0016020">
    <property type="term" value="C:membrane"/>
    <property type="evidence" value="ECO:0007669"/>
    <property type="project" value="UniProtKB-KW"/>
</dbReference>
<dbReference type="GO" id="GO:0019013">
    <property type="term" value="C:viral nucleocapsid"/>
    <property type="evidence" value="ECO:0007669"/>
    <property type="project" value="UniProtKB-KW"/>
</dbReference>
<dbReference type="GO" id="GO:0004190">
    <property type="term" value="F:aspartic-type endopeptidase activity"/>
    <property type="evidence" value="ECO:0007669"/>
    <property type="project" value="UniProtKB-KW"/>
</dbReference>
<dbReference type="GO" id="GO:0003677">
    <property type="term" value="F:DNA binding"/>
    <property type="evidence" value="ECO:0007669"/>
    <property type="project" value="UniProtKB-KW"/>
</dbReference>
<dbReference type="GO" id="GO:0003887">
    <property type="term" value="F:DNA-directed DNA polymerase activity"/>
    <property type="evidence" value="ECO:0007669"/>
    <property type="project" value="UniProtKB-KW"/>
</dbReference>
<dbReference type="GO" id="GO:0003723">
    <property type="term" value="F:RNA binding"/>
    <property type="evidence" value="ECO:0007669"/>
    <property type="project" value="UniProtKB-KW"/>
</dbReference>
<dbReference type="GO" id="GO:0003964">
    <property type="term" value="F:RNA-directed DNA polymerase activity"/>
    <property type="evidence" value="ECO:0007669"/>
    <property type="project" value="UniProtKB-KW"/>
</dbReference>
<dbReference type="GO" id="GO:0004523">
    <property type="term" value="F:RNA-DNA hybrid ribonuclease activity"/>
    <property type="evidence" value="ECO:0007669"/>
    <property type="project" value="UniProtKB-EC"/>
</dbReference>
<dbReference type="GO" id="GO:0039660">
    <property type="term" value="F:structural constituent of virion"/>
    <property type="evidence" value="ECO:0007669"/>
    <property type="project" value="UniProtKB-KW"/>
</dbReference>
<dbReference type="GO" id="GO:0008270">
    <property type="term" value="F:zinc ion binding"/>
    <property type="evidence" value="ECO:0007669"/>
    <property type="project" value="UniProtKB-KW"/>
</dbReference>
<dbReference type="GO" id="GO:0015074">
    <property type="term" value="P:DNA integration"/>
    <property type="evidence" value="ECO:0007669"/>
    <property type="project" value="UniProtKB-KW"/>
</dbReference>
<dbReference type="GO" id="GO:0006310">
    <property type="term" value="P:DNA recombination"/>
    <property type="evidence" value="ECO:0007669"/>
    <property type="project" value="UniProtKB-KW"/>
</dbReference>
<dbReference type="GO" id="GO:0075713">
    <property type="term" value="P:establishment of integrated proviral latency"/>
    <property type="evidence" value="ECO:0007669"/>
    <property type="project" value="UniProtKB-KW"/>
</dbReference>
<dbReference type="GO" id="GO:0006508">
    <property type="term" value="P:proteolysis"/>
    <property type="evidence" value="ECO:0007669"/>
    <property type="project" value="UniProtKB-KW"/>
</dbReference>
<dbReference type="GO" id="GO:0046718">
    <property type="term" value="P:symbiont entry into host cell"/>
    <property type="evidence" value="ECO:0007669"/>
    <property type="project" value="UniProtKB-KW"/>
</dbReference>
<dbReference type="GO" id="GO:0044826">
    <property type="term" value="P:viral genome integration into host DNA"/>
    <property type="evidence" value="ECO:0007669"/>
    <property type="project" value="UniProtKB-KW"/>
</dbReference>
<dbReference type="GO" id="GO:0019068">
    <property type="term" value="P:virion assembly"/>
    <property type="evidence" value="ECO:0007669"/>
    <property type="project" value="InterPro"/>
</dbReference>
<dbReference type="CDD" id="cd09273">
    <property type="entry name" value="RNase_HI_RT_Bel"/>
    <property type="match status" value="1"/>
</dbReference>
<dbReference type="CDD" id="cd06095">
    <property type="entry name" value="RP_RTVL_H_like"/>
    <property type="match status" value="1"/>
</dbReference>
<dbReference type="CDD" id="cd03715">
    <property type="entry name" value="RT_ZFREV_like"/>
    <property type="match status" value="1"/>
</dbReference>
<dbReference type="FunFam" id="1.10.150.180:FF:000001">
    <property type="entry name" value="Gag polyprotein"/>
    <property type="match status" value="1"/>
</dbReference>
<dbReference type="FunFam" id="1.10.340.70:FF:000009">
    <property type="entry name" value="Gag-Pol polyprotein"/>
    <property type="match status" value="1"/>
</dbReference>
<dbReference type="FunFam" id="2.40.70.10:FF:000087">
    <property type="entry name" value="Gag-Pol polyprotein"/>
    <property type="match status" value="1"/>
</dbReference>
<dbReference type="FunFam" id="3.30.420.10:FF:000094">
    <property type="entry name" value="Gag-Pol polyprotein"/>
    <property type="match status" value="1"/>
</dbReference>
<dbReference type="FunFam" id="3.30.420.10:FF:000102">
    <property type="entry name" value="Gag-Pol polyprotein"/>
    <property type="match status" value="1"/>
</dbReference>
<dbReference type="FunFam" id="3.30.70.270:FF:000020">
    <property type="entry name" value="Transposon Tf2-6 polyprotein-like Protein"/>
    <property type="match status" value="1"/>
</dbReference>
<dbReference type="Gene3D" id="1.10.340.70">
    <property type="match status" value="1"/>
</dbReference>
<dbReference type="Gene3D" id="2.30.30.850">
    <property type="match status" value="1"/>
</dbReference>
<dbReference type="Gene3D" id="3.10.20.370">
    <property type="match status" value="1"/>
</dbReference>
<dbReference type="Gene3D" id="3.30.70.270">
    <property type="match status" value="2"/>
</dbReference>
<dbReference type="Gene3D" id="2.40.70.10">
    <property type="entry name" value="Acid Proteases"/>
    <property type="match status" value="1"/>
</dbReference>
<dbReference type="Gene3D" id="1.10.150.180">
    <property type="entry name" value="Gamma-retroviral matrix domain"/>
    <property type="match status" value="1"/>
</dbReference>
<dbReference type="Gene3D" id="3.10.10.10">
    <property type="entry name" value="HIV Type 1 Reverse Transcriptase, subunit A, domain 1"/>
    <property type="match status" value="1"/>
</dbReference>
<dbReference type="Gene3D" id="1.10.375.10">
    <property type="entry name" value="Human Immunodeficiency Virus Type 1 Capsid Protein"/>
    <property type="match status" value="1"/>
</dbReference>
<dbReference type="Gene3D" id="3.30.420.10">
    <property type="entry name" value="Ribonuclease H-like superfamily/Ribonuclease H"/>
    <property type="match status" value="2"/>
</dbReference>
<dbReference type="Gene3D" id="4.10.60.10">
    <property type="entry name" value="Zinc finger, CCHC-type"/>
    <property type="match status" value="1"/>
</dbReference>
<dbReference type="InterPro" id="IPR001969">
    <property type="entry name" value="Aspartic_peptidase_AS"/>
</dbReference>
<dbReference type="InterPro" id="IPR043502">
    <property type="entry name" value="DNA/RNA_pol_sf"/>
</dbReference>
<dbReference type="InterPro" id="IPR000840">
    <property type="entry name" value="G_retro_matrix"/>
</dbReference>
<dbReference type="InterPro" id="IPR036946">
    <property type="entry name" value="G_retro_matrix_sf"/>
</dbReference>
<dbReference type="InterPro" id="IPR039464">
    <property type="entry name" value="Gag-pol_Znf-H3C2"/>
</dbReference>
<dbReference type="InterPro" id="IPR002079">
    <property type="entry name" value="Gag_p12"/>
</dbReference>
<dbReference type="InterPro" id="IPR003036">
    <property type="entry name" value="Gag_P30"/>
</dbReference>
<dbReference type="InterPro" id="IPR001584">
    <property type="entry name" value="Integrase_cat-core"/>
</dbReference>
<dbReference type="InterPro" id="IPR040643">
    <property type="entry name" value="MLVIN_C"/>
</dbReference>
<dbReference type="InterPro" id="IPR001995">
    <property type="entry name" value="Peptidase_A2_cat"/>
</dbReference>
<dbReference type="InterPro" id="IPR021109">
    <property type="entry name" value="Peptidase_aspartic_dom_sf"/>
</dbReference>
<dbReference type="InterPro" id="IPR018061">
    <property type="entry name" value="Retropepsins"/>
</dbReference>
<dbReference type="InterPro" id="IPR008919">
    <property type="entry name" value="Retrov_capsid_N"/>
</dbReference>
<dbReference type="InterPro" id="IPR050462">
    <property type="entry name" value="Retroviral_Gag-Pol_poly"/>
</dbReference>
<dbReference type="InterPro" id="IPR010999">
    <property type="entry name" value="Retrovr_matrix"/>
</dbReference>
<dbReference type="InterPro" id="IPR043128">
    <property type="entry name" value="Rev_trsase/Diguanyl_cyclase"/>
</dbReference>
<dbReference type="InterPro" id="IPR012337">
    <property type="entry name" value="RNaseH-like_sf"/>
</dbReference>
<dbReference type="InterPro" id="IPR002156">
    <property type="entry name" value="RNaseH_domain"/>
</dbReference>
<dbReference type="InterPro" id="IPR036397">
    <property type="entry name" value="RNaseH_sf"/>
</dbReference>
<dbReference type="InterPro" id="IPR000477">
    <property type="entry name" value="RT_dom"/>
</dbReference>
<dbReference type="InterPro" id="IPR041577">
    <property type="entry name" value="RT_RNaseH_2"/>
</dbReference>
<dbReference type="InterPro" id="IPR001878">
    <property type="entry name" value="Znf_CCHC"/>
</dbReference>
<dbReference type="InterPro" id="IPR036875">
    <property type="entry name" value="Znf_CCHC_sf"/>
</dbReference>
<dbReference type="PANTHER" id="PTHR33166">
    <property type="entry name" value="GAG_P30 DOMAIN-CONTAINING PROTEIN"/>
    <property type="match status" value="1"/>
</dbReference>
<dbReference type="Pfam" id="PF01140">
    <property type="entry name" value="Gag_MA"/>
    <property type="match status" value="1"/>
</dbReference>
<dbReference type="Pfam" id="PF01141">
    <property type="entry name" value="Gag_p12"/>
    <property type="match status" value="1"/>
</dbReference>
<dbReference type="Pfam" id="PF02093">
    <property type="entry name" value="Gag_p30"/>
    <property type="match status" value="1"/>
</dbReference>
<dbReference type="Pfam" id="PF18697">
    <property type="entry name" value="MLVIN_C"/>
    <property type="match status" value="1"/>
</dbReference>
<dbReference type="Pfam" id="PF00075">
    <property type="entry name" value="RNase_H"/>
    <property type="match status" value="1"/>
</dbReference>
<dbReference type="Pfam" id="PF17919">
    <property type="entry name" value="RT_RNaseH_2"/>
    <property type="match status" value="1"/>
</dbReference>
<dbReference type="Pfam" id="PF00665">
    <property type="entry name" value="rve"/>
    <property type="match status" value="1"/>
</dbReference>
<dbReference type="Pfam" id="PF00077">
    <property type="entry name" value="RVP"/>
    <property type="match status" value="1"/>
</dbReference>
<dbReference type="Pfam" id="PF00078">
    <property type="entry name" value="RVT_1"/>
    <property type="match status" value="1"/>
</dbReference>
<dbReference type="Pfam" id="PF00098">
    <property type="entry name" value="zf-CCHC"/>
    <property type="match status" value="1"/>
</dbReference>
<dbReference type="Pfam" id="PF16721">
    <property type="entry name" value="zf-H3C2"/>
    <property type="match status" value="1"/>
</dbReference>
<dbReference type="SMART" id="SM00343">
    <property type="entry name" value="ZnF_C2HC"/>
    <property type="match status" value="1"/>
</dbReference>
<dbReference type="SUPFAM" id="SSF50630">
    <property type="entry name" value="Acid proteases"/>
    <property type="match status" value="1"/>
</dbReference>
<dbReference type="SUPFAM" id="SSF56672">
    <property type="entry name" value="DNA/RNA polymerases"/>
    <property type="match status" value="1"/>
</dbReference>
<dbReference type="SUPFAM" id="SSF47836">
    <property type="entry name" value="Retroviral matrix proteins"/>
    <property type="match status" value="1"/>
</dbReference>
<dbReference type="SUPFAM" id="SSF47943">
    <property type="entry name" value="Retrovirus capsid protein, N-terminal core domain"/>
    <property type="match status" value="1"/>
</dbReference>
<dbReference type="SUPFAM" id="SSF57756">
    <property type="entry name" value="Retrovirus zinc finger-like domains"/>
    <property type="match status" value="1"/>
</dbReference>
<dbReference type="SUPFAM" id="SSF53098">
    <property type="entry name" value="Ribonuclease H-like"/>
    <property type="match status" value="2"/>
</dbReference>
<dbReference type="PROSITE" id="PS50175">
    <property type="entry name" value="ASP_PROT_RETROV"/>
    <property type="match status" value="1"/>
</dbReference>
<dbReference type="PROSITE" id="PS00141">
    <property type="entry name" value="ASP_PROTEASE"/>
    <property type="match status" value="1"/>
</dbReference>
<dbReference type="PROSITE" id="PS50994">
    <property type="entry name" value="INTEGRASE"/>
    <property type="match status" value="1"/>
</dbReference>
<dbReference type="PROSITE" id="PS50879">
    <property type="entry name" value="RNASE_H_1"/>
    <property type="match status" value="1"/>
</dbReference>
<dbReference type="PROSITE" id="PS50878">
    <property type="entry name" value="RT_POL"/>
    <property type="match status" value="1"/>
</dbReference>
<dbReference type="PROSITE" id="PS50158">
    <property type="entry name" value="ZF_CCHC"/>
    <property type="match status" value="1"/>
</dbReference>
<gene>
    <name type="primary">gag-pol</name>
</gene>
<organismHost>
    <name type="scientific">Homo sapiens</name>
    <name type="common">Human</name>
    <dbReference type="NCBI Taxonomy" id="9606"/>
</organismHost>
<protein>
    <recommendedName>
        <fullName>Gag-Pol polyprotein</fullName>
        <shortName>Pr180gag-pol</shortName>
    </recommendedName>
    <component>
        <recommendedName>
            <fullName>Matrix protein p15</fullName>
            <shortName>MA</shortName>
        </recommendedName>
    </component>
    <component>
        <recommendedName>
            <fullName>RNA-binding phosphoprotein p12</fullName>
        </recommendedName>
        <alternativeName>
            <fullName>pp12</fullName>
        </alternativeName>
    </component>
    <component>
        <recommendedName>
            <fullName>Capsid protein p30</fullName>
            <shortName>CA</shortName>
        </recommendedName>
    </component>
    <component>
        <recommendedName>
            <fullName>Nucleocapsid protein p10</fullName>
            <shortName>NC-pol</shortName>
        </recommendedName>
    </component>
    <component>
        <recommendedName>
            <fullName>Protease p14</fullName>
            <shortName>PR</shortName>
            <ecNumber>3.4.23.-</ecNumber>
        </recommendedName>
    </component>
    <component>
        <recommendedName>
            <fullName>Reverse transcriptase/ribonuclease H p80</fullName>
            <shortName>RT</shortName>
            <ecNumber>2.7.7.49</ecNumber>
            <ecNumber>2.7.7.7</ecNumber>
            <ecNumber>3.1.26.4</ecNumber>
        </recommendedName>
    </component>
    <component>
        <recommendedName>
            <fullName>Integrase p46</fullName>
            <shortName>IN</shortName>
            <ecNumber evidence="5">2.7.7.-</ecNumber>
            <ecNumber evidence="5">3.1.-.-</ecNumber>
        </recommendedName>
    </component>
</protein>
<name>POL_XMRV3</name>
<evidence type="ECO:0000250" key="1"/>
<evidence type="ECO:0000250" key="2">
    <source>
        <dbReference type="UniProtKB" id="A1Z651"/>
    </source>
</evidence>
<evidence type="ECO:0000250" key="3">
    <source>
        <dbReference type="UniProtKB" id="P03332"/>
    </source>
</evidence>
<evidence type="ECO:0000250" key="4">
    <source>
        <dbReference type="UniProtKB" id="P03336"/>
    </source>
</evidence>
<evidence type="ECO:0000250" key="5">
    <source>
        <dbReference type="UniProtKB" id="P03355"/>
    </source>
</evidence>
<evidence type="ECO:0000255" key="6"/>
<evidence type="ECO:0000255" key="7">
    <source>
        <dbReference type="PROSITE-ProRule" id="PRU00047"/>
    </source>
</evidence>
<evidence type="ECO:0000255" key="8">
    <source>
        <dbReference type="PROSITE-ProRule" id="PRU00275"/>
    </source>
</evidence>
<evidence type="ECO:0000255" key="9">
    <source>
        <dbReference type="PROSITE-ProRule" id="PRU00405"/>
    </source>
</evidence>
<evidence type="ECO:0000255" key="10">
    <source>
        <dbReference type="PROSITE-ProRule" id="PRU00408"/>
    </source>
</evidence>
<evidence type="ECO:0000255" key="11">
    <source>
        <dbReference type="PROSITE-ProRule" id="PRU00457"/>
    </source>
</evidence>
<evidence type="ECO:0000256" key="12">
    <source>
        <dbReference type="SAM" id="MobiDB-lite"/>
    </source>
</evidence>
<evidence type="ECO:0000269" key="13">
    <source>
    </source>
</evidence>
<evidence type="ECO:0000305" key="14"/>
<evidence type="ECO:0000305" key="15">
    <source>
    </source>
</evidence>
<evidence type="ECO:0000305" key="16">
    <source>
    </source>
</evidence>
<evidence type="ECO:0007744" key="17">
    <source>
        <dbReference type="PDB" id="3V1O"/>
    </source>
</evidence>
<evidence type="ECO:0007744" key="18">
    <source>
        <dbReference type="PDB" id="3V1Q"/>
    </source>
</evidence>
<evidence type="ECO:0007744" key="19">
    <source>
        <dbReference type="PDB" id="3V1R"/>
    </source>
</evidence>
<evidence type="ECO:0007829" key="20">
    <source>
        <dbReference type="PDB" id="3V1O"/>
    </source>
</evidence>
<evidence type="ECO:0007829" key="21">
    <source>
        <dbReference type="PDB" id="3V1Q"/>
    </source>
</evidence>
<organism>
    <name type="scientific">Xenotropic MuLV-related virus (isolate VP35)</name>
    <name type="common">XMRV</name>
    <dbReference type="NCBI Taxonomy" id="356663"/>
    <lineage>
        <taxon>Viruses</taxon>
        <taxon>Riboviria</taxon>
        <taxon>Pararnavirae</taxon>
        <taxon>Artverviricota</taxon>
        <taxon>Revtraviricetes</taxon>
        <taxon>Ortervirales</taxon>
        <taxon>Retroviridae</taxon>
        <taxon>Orthoretrovirinae</taxon>
        <taxon>Gammaretrovirus</taxon>
        <taxon>Murine leukemia-related retroviruses</taxon>
    </lineage>
</organism>
<proteinExistence type="evidence at protein level"/>
<comment type="function">
    <molecule>Gag-Pol polyprotein</molecule>
    <text evidence="3">Plays a role in budding and is processed by the viral protease during virion maturation outside the cell. During budding, it recruits, in a PPXY-dependent or independent manner, Nedd4-like ubiquitin ligases that conjugate ubiquitin molecules to Gag, or to Gag binding host factors. Interaction with HECT ubiquitin ligases probably link the viral protein to the host ESCRT pathway and facilitate release.</text>
</comment>
<comment type="function">
    <molecule>Matrix protein p15</molecule>
    <text evidence="3">Targets Gag and gag-pol polyproteins to the plasma membrane via a multipartite membrane binding signal, that includes its myristoylated N-terminus. Also mediates nuclear localization of the pre-integration complex.</text>
</comment>
<comment type="function">
    <molecule>Capsid protein p30</molecule>
    <text evidence="4">Forms the spherical core of the virion that encapsulates the genomic RNA-nucleocapsid complex.</text>
</comment>
<comment type="function">
    <molecule>Nucleocapsid protein p10</molecule>
    <text evidence="3 5">Involved in the packaging and encapsidation of two copies of the genome (By similarity). Binds with high affinity to conserved UCUG elements within the packaging signal, located near the 5'-end of the genome (By similarity). This binding is dependent on genome dimerization (By similarity). Acts as a nucleic acid chaperone which is involved in rearrangement of nucleic acid secondary structures during gRNA retrotranscription (By similarity).</text>
</comment>
<comment type="function">
    <molecule>Protease p14</molecule>
    <text evidence="8">The aspartyl protease mediates proteolytic cleavages of Gag and Gag-Pol polyproteins during or shortly after the release of the virion from the plasma membrane. Cleavages take place as an ordered, step-wise cascade to yield mature proteins. This process is called maturation. Displays maximal activity during the budding process just prior to particle release from the cell.</text>
</comment>
<comment type="function">
    <molecule>Reverse transcriptase/ribonuclease H p80</molecule>
    <text evidence="1">RT is a multifunctional enzyme that converts the viral dimeric RNA genome into dsDNA in the cytoplasm, shortly after virus entry into the cell. This enzyme displays a DNA polymerase activity that can copy either DNA or RNA templates, and a ribonuclease H (RNase H) activity that cleaves the RNA strand of RNA-DNA heteroduplexes in a partially processive 3' to 5' endonucleasic mode. Conversion of viral genomic RNA into dsDNA requires many steps. A tRNA binds to the primer-binding site (PBS) situated at the 5' end of the viral RNA. RT uses the 3' end of the tRNA primer to perform a short round of RNA-dependent minus-strand DNA synthesis. The reading proceeds through the U5 region and ends after the repeated (R) region which is present at both ends of viral RNA. The portion of the RNA-DNA heteroduplex is digested by the RNase H, resulting in a ssDNA product attached to the tRNA primer. This ssDNA/tRNA hybridizes with the identical R region situated at the 3' end of viral RNA. This template exchange, known as minus-strand DNA strong stop transfer, can be either intra- or intermolecular. RT uses the 3' end of this newly synthesized short ssDNA to perform the RNA-dependent minus-strand DNA synthesis of the whole template. RNase H digests the RNA template except for a polypurine tract (PPT) situated at the 5' end of the genome. It is not clear if both polymerase and RNase H activities are simultaneous. RNase H probably can proceed both in a polymerase-dependent (RNA cut into small fragments by the same RT performing DNA synthesis) and a polymerase-independent mode (cleavage of remaining RNA fragments by free RTs). Secondly, RT performs DNA-directed plus-strand DNA synthesis using the PPT that has not been removed by RNase H as primers. PPT and tRNA primers are then removed by RNase H. The 3' and 5' ssDNA PBS regions hybridize to form a circular dsDNA intermediate. Strand displacement synthesis by RT to the PBS and PPT ends produces a blunt ended, linear dsDNA copy of the viral genome that includes long terminal repeats (LTRs) at both ends (By similarity).</text>
</comment>
<comment type="function">
    <molecule>Integrase p46</molecule>
    <text evidence="5">Catalyzes viral DNA integration into the host chromosome, by performing a series of DNA cutting and joining reactions. This enzyme activity takes place after virion entry into a cell and reverse transcription of the RNA genome in dsDNA. The first step in the integration process is 3' processing. This step requires a complex comprising the viral genome, matrix protein and integrase. This complex is called the pre-integration complex (PIC). The integrase protein removes 2 nucleotides from each 3' end of the viral DNA, leaving recessed CA OH's at the 3' ends. In the second step that requires cell division, the PIC enters cell nucleus. In the third step, termed strand transfer, the integrase protein joins the previously processed 3' ends to the 5' ends of strands of target cellular DNA at the site of integration. The last step is viral DNA integration into host chromosome.</text>
</comment>
<comment type="catalytic activity">
    <molecule>Reverse transcriptase/ribonuclease H p80</molecule>
    <reaction evidence="9">
        <text>DNA(n) + a 2'-deoxyribonucleoside 5'-triphosphate = DNA(n+1) + diphosphate</text>
        <dbReference type="Rhea" id="RHEA:22508"/>
        <dbReference type="Rhea" id="RHEA-COMP:17339"/>
        <dbReference type="Rhea" id="RHEA-COMP:17340"/>
        <dbReference type="ChEBI" id="CHEBI:33019"/>
        <dbReference type="ChEBI" id="CHEBI:61560"/>
        <dbReference type="ChEBI" id="CHEBI:173112"/>
        <dbReference type="EC" id="2.7.7.49"/>
    </reaction>
</comment>
<comment type="catalytic activity">
    <molecule>Reverse transcriptase/ribonuclease H p80</molecule>
    <reaction evidence="9">
        <text>DNA(n) + a 2'-deoxyribonucleoside 5'-triphosphate = DNA(n+1) + diphosphate</text>
        <dbReference type="Rhea" id="RHEA:22508"/>
        <dbReference type="Rhea" id="RHEA-COMP:17339"/>
        <dbReference type="Rhea" id="RHEA-COMP:17340"/>
        <dbReference type="ChEBI" id="CHEBI:33019"/>
        <dbReference type="ChEBI" id="CHEBI:61560"/>
        <dbReference type="ChEBI" id="CHEBI:173112"/>
        <dbReference type="EC" id="2.7.7.7"/>
    </reaction>
</comment>
<comment type="catalytic activity">
    <molecule>Protease p14</molecule>
    <reaction evidence="10">
        <text>Endonucleolytic cleavage to 5'-phosphomonoester.</text>
        <dbReference type="EC" id="3.1.26.4"/>
    </reaction>
</comment>
<comment type="cofactor">
    <molecule>Reverse transcriptase/ribonuclease H p80</molecule>
    <cofactor evidence="1">
        <name>Mg(2+)</name>
        <dbReference type="ChEBI" id="CHEBI:18420"/>
    </cofactor>
    <text evidence="1">Binds 2 magnesium ions for reverse transcriptase polymerase activity.</text>
</comment>
<comment type="cofactor">
    <molecule>Reverse transcriptase/ribonuclease H p80</molecule>
    <cofactor evidence="13">
        <name>Mn(2+)</name>
        <dbReference type="ChEBI" id="CHEBI:29035"/>
    </cofactor>
    <cofactor evidence="2">
        <name>Mg(2+)</name>
        <dbReference type="ChEBI" id="CHEBI:18420"/>
    </cofactor>
    <text evidence="2 13">Binds 2 Mn(2+)/Mg(2+) ions for ribonuclease H (RNase H) activity (PubMed:22366278). Shows 4- to 6-fold increased rates of cleavage in the presence of Mn(2+) versus Mg2(2+) (By similarity).</text>
</comment>
<comment type="cofactor">
    <molecule>Integrase p46</molecule>
    <cofactor evidence="1">
        <name>Mg(2+)</name>
        <dbReference type="ChEBI" id="CHEBI:18420"/>
    </cofactor>
    <text evidence="1">Magnesium ions are required for integrase activity. Binds at least 1, maybe 2 magnesium ions.</text>
</comment>
<comment type="subunit">
    <molecule>Capsid protein p30</molecule>
    <text evidence="5">Homohexamer, that further associates as homomultimer. The virus core is composed of a lattice formed from hexagonal rings, each containing six capsid monomers. The protease is a homodimer, whose active site consists of two apposed aspartic acid residues. The reverse transcriptase is a monomer.</text>
</comment>
<comment type="subunit">
    <molecule>Gag-Pol polyprotein</molecule>
    <text evidence="5">Interacts (via PPXY motif) with host NEDD4 (By similarity). Interacts (via PSAP motif) with host TSG101 (By similarity). Interacts (via LYPX(n)L motif) with host PDCD6IP (By similarity).</text>
</comment>
<comment type="subunit">
    <molecule>Reverse transcriptase/ribonuclease H p80</molecule>
    <text evidence="5">The reverse transcriptase is a monomer (Potential). Interacts (via RNase domains) with host release factor ETF1; this interaction is essential for translational readthrough of amber codon between viral gag and pol genes, as well as for viral replication.</text>
</comment>
<comment type="subunit">
    <molecule>Integrase p46</molecule>
    <text evidence="5">Homodimer.</text>
</comment>
<comment type="subcellular location">
    <molecule>Gag-Pol polyprotein</molecule>
    <subcellularLocation>
        <location evidence="14">Host cell membrane</location>
        <topology evidence="14">Lipid-anchor</topology>
    </subcellularLocation>
</comment>
<comment type="subcellular location">
    <molecule>Matrix protein p15</molecule>
    <subcellularLocation>
        <location evidence="14">Virion</location>
    </subcellularLocation>
</comment>
<comment type="subcellular location">
    <molecule>Capsid protein p30</molecule>
    <subcellularLocation>
        <location evidence="14">Virion</location>
    </subcellularLocation>
</comment>
<comment type="subcellular location">
    <molecule>Nucleocapsid protein p10</molecule>
    <subcellularLocation>
        <location evidence="14">Virion</location>
    </subcellularLocation>
</comment>
<comment type="domain">
    <molecule>Gag-Pol polyprotein</molecule>
    <text evidence="3">Late-budding domains (L domains) are short sequence motifs essential for viral particle release. They can occur individually or in close proximity within structural proteins. They interacts with sorting cellular proteins of the multivesicular body (MVB) pathway. Most of these proteins are class E vacuolar protein sorting factors belonging to ESCRT-I, ESCRT-II or ESCRT-III complexes. RNA-binding phosphoprotein p12 contains one L domain: a PPXY motif which potentially interacts with the WW domain 3 of NEDD4 E3 ubiquitin ligase. PPXY motif is essential for virus egress. Matrix protein p15 contains one L domain: a PTAP/PSAP motif, which potentially interacts with the UEV domain of TSG101. The junction between the matrix protein p15 and RNA-binding phosphoprotein p12 also contains one L domain: a LYPX(n)L motif which potentially interacts with PDCD6IP. Both PSAP and LYPX(n)L domains might play little to no role in budding and possibly drive residual virus release. contains.</text>
</comment>
<comment type="PTM">
    <molecule>Gag-Pol polyprotein</molecule>
    <text evidence="5">Specific enzymatic cleavages by the viral protease yield mature proteins. The protease is released by autocatalytic cleavage. The polyprotein is cleaved during and after budding, this process is termed maturation.</text>
</comment>
<comment type="PTM">
    <molecule>Capsid protein p30</molecule>
    <text evidence="5">Sumoylated; which is required for virus replication.</text>
</comment>
<comment type="PTM">
    <molecule>RNA-binding phosphoprotein p12</molecule>
    <text evidence="5">Phosphorylated on serine residues.</text>
</comment>
<comment type="miscellaneous">
    <molecule>Gag-Pol polyprotein</molecule>
    <text evidence="5">This protein is translated as a gag-pol fusion protein by episodic readthrough of the gag protein termination codon. Readthrough of the terminator codon TAG occurs between the codons for 536-Asp and 538-Gly.</text>
</comment>
<comment type="miscellaneous">
    <molecule>Nucleocapsid protein p10</molecule>
    <text evidence="1">Nucleocapsid protein p10 released from Pol polyprotein (NC-pol) is a few amino acids shorter than the nucleocapsid protein p10 released from Gag polyprotein (NC-gag).</text>
</comment>
<comment type="miscellaneous">
    <molecule>Reverse transcriptase/ribonuclease H p80</molecule>
    <text evidence="9">The reverse transcriptase is an error-prone enzyme that lacks a proof-reading function. High mutations rate is a direct consequence of this characteristic. RT also displays frequent template switching leading to high recombination rate. Recombination mostly occurs between homologous regions of the two copackaged RNA genomes. If these two RNA molecules derive from different viral strains, reverse transcription will give rise to highly recombinated proviral DNAs.</text>
</comment>
<comment type="caution">
    <text evidence="15 16">Originally thought to be characterized from prostate tumors, the described gammaretrovirus XMRV is in fact laboratory-derived and there is no association of XMRV with prostate cancer.</text>
</comment>
<sequence length="1733" mass="193803">MGQTVTTPLSLTLQHWGDVQRIASNQSVDVKKRRWVTFCSAEWPTFNVGWPQDGTFNLGVISQVKSRVFCPGPHGHPDQVPYIVTWEALAYDPPPWVKPFVSPKPPPLPTAPVLPPGPSAQPPSRSALYPALTLSIKSKPPKPQVLPDSGGPLIDLLTEDPPPYGVQPSSSARENNEEEAATTSEVSPPSPMVSRLRGRRDPPAADSTTSQAFPLRMGGDGQLQYWPFSSSDLYNWKNNNPSFSEDPGKLTALIESVLITHQPTWDDCQQLLGTLLTGEEKQRVLLEAGKAVRGNDGRPTQLPNEVNAAFPLERPDWDYTTTEGRNHLVLYRQLLLAGLQNAGRSPTNLAKVKGITQGPNESPSAFLERLKEAYRRYTPYDPEDPGQETNVSMSFIWQSAPDIGRKLERLEDLKSKTLGDLVREAEKIFNKRETPEEREERIRREIEEKEERRRAEDEQRERERDRRRHREMSKLLATVVIGQRQDRQGGERRRPQLDKDQCAYCKEKGHWAKDCPKKPRGPRGPRPQTSLLTLGDXGGQGQEPPPEPRITLKVGGQPVTFLVDTGAQHSVLTQNPGPLSDKSAWVQGATGGKRYRWTTDRKVHLATGKVTHSFLHVPDCPYPLLGRDLLTKLKAQIHFEGSGAQVVGPMGQPLQVLTLNIENKYRLHETSKEPDVPLGSTWLSDFPQAWAETGGMGLAVRQAPLIIPLKATSTPVSIKQYPMSQEARLGIKPHIQRLLDQGILVPCQSPWNTPLLPVKKPGTNDYRPVQDLREVNKRVEDIHPTVPNPYNLLSGLPPSHQWYTVLDLKDAFFCLRLHPTSQPLFAFEWRDPEMGISGQLTWTRLPQGFKNSPTLFDEALHRDLADFRIQHPDLILLQYVDDLLLAATSEQDCQRGTRALLQTLGNLGYRASAKKAQICQKQVKYLGYLLKEGQRWLTEARKETVMGQPTPKTPRQLREFLGTAGFCRLWIPGFAEMAAPLYPLTKTGTLFNWGPDQQKAYQEIKQALLTAPALGLPDLTKPFELFVDEKQGYAKGVLTQKLGPWRRPVAYLSKKLDPVAAGWPPCLRMVAAIAVLTKDAGKLTMGQPLVILAPHAVEALVKQPPDRWLSNARMTHYQAMLLDTDRVQFGPVVALNPATLLPLPEKEAPHDCLEILAETHGTRPDLTDQPIPDADYTWYTDGSSFLQEGQRRAGAAVTTETEVIWARALPAGTSAQRAELIALTQALKMAEGKKLNVYTDSRYAFATAHVHGEIYRRRGLLTSEGREIKNKNEILALLKALFLPKRLSIIHCPGHQKGNSAEARGNRMADQAAREAAMKAVLETSTLLIEDSTPYTPPHFHYTETDLKRLRELGATYNQTKGYWVLQGKPVMPDQSVFELLDSLHRLTHPSPQKMKALLDREESPYYMLNRDRTIQYVTETCTACAQVNASKAKIGAGVRVRGHRPGTHWEVDFTEVKPGLYGYKYLLVFVDTFSGWVEAFPTKRETAKVVTKKLLEDIFPRFGMPQVLGSDNGPAFASQVSQSVADLLGIDWKLHCAYRPQSSGQVERMNRTIKETLTKLTLASGTRDWVLLLPLALYRARNTPGPHGLTPYEILYGAPPPLVNFHDPEMSKLTNSPSLQAHLQALQAVQQEVWKPLAAAYQDQLDQPVIPHPFRVGDAVWVRRHQTKNLEPRWKGPYTVLLTTPTALKVDGISAWIHAAHVKAATTPPAGTAWKVQRSQNPLKIRLTRGAP</sequence>
<keyword id="KW-0002">3D-structure</keyword>
<keyword id="KW-0064">Aspartyl protease</keyword>
<keyword id="KW-0167">Capsid protein</keyword>
<keyword id="KW-0175">Coiled coil</keyword>
<keyword id="KW-0229">DNA integration</keyword>
<keyword id="KW-0233">DNA recombination</keyword>
<keyword id="KW-0238">DNA-binding</keyword>
<keyword id="KW-0239">DNA-directed DNA polymerase</keyword>
<keyword id="KW-0255">Endonuclease</keyword>
<keyword id="KW-1032">Host cell membrane</keyword>
<keyword id="KW-1043">Host membrane</keyword>
<keyword id="KW-0378">Hydrolase</keyword>
<keyword id="KW-0449">Lipoprotein</keyword>
<keyword id="KW-0460">Magnesium</keyword>
<keyword id="KW-0464">Manganese</keyword>
<keyword id="KW-0472">Membrane</keyword>
<keyword id="KW-0479">Metal-binding</keyword>
<keyword id="KW-0511">Multifunctional enzyme</keyword>
<keyword id="KW-0519">Myristate</keyword>
<keyword id="KW-0540">Nuclease</keyword>
<keyword id="KW-0548">Nucleotidyltransferase</keyword>
<keyword id="KW-0597">Phosphoprotein</keyword>
<keyword id="KW-0645">Protease</keyword>
<keyword id="KW-1159">RNA suppression of termination</keyword>
<keyword id="KW-0694">RNA-binding</keyword>
<keyword id="KW-0695">RNA-directed DNA polymerase</keyword>
<keyword id="KW-0808">Transferase</keyword>
<keyword id="KW-0832">Ubl conjugation</keyword>
<keyword id="KW-1179">Viral genome integration</keyword>
<keyword id="KW-0468">Viral matrix protein</keyword>
<keyword id="KW-0543">Viral nucleoprotein</keyword>
<keyword id="KW-0946">Virion</keyword>
<keyword id="KW-1160">Virus entry into host cell</keyword>
<keyword id="KW-0862">Zinc</keyword>
<keyword id="KW-0863">Zinc-finger</keyword>
<reference key="1">
    <citation type="journal article" date="2006" name="PLoS Pathog.">
        <title>Identification of a novel Gammaretrovirus in prostate tumors of patients homozygous for R462Q RNASEL variant.</title>
        <authorList>
            <person name="Urisman A."/>
            <person name="Molinaro R.J."/>
            <person name="Fischer N."/>
            <person name="Plummer S.J."/>
            <person name="Casey G."/>
            <person name="Klein E.A."/>
            <person name="Malathi K."/>
            <person name="Magi-Galluzzi C."/>
            <person name="Tubbs R.R."/>
            <person name="Ganem D."/>
            <person name="Silverman R.H."/>
            <person name="DeRisi J.L."/>
        </authorList>
    </citation>
    <scope>NUCLEOTIDE SEQUENCE [GENOMIC RNA]</scope>
    <scope>RETRACTED PAPER</scope>
</reference>
<reference key="2">
    <citation type="journal article" date="2012" name="PLoS Pathog.">
        <authorList>
            <person name="Urisman A."/>
            <person name="Molinaro R.J."/>
            <person name="Fischer N."/>
            <person name="Plummer S.J."/>
            <person name="Casey G."/>
            <person name="Klein E.A."/>
            <person name="Malathi K."/>
            <person name="Magi-Galluzzi C."/>
            <person name="Tubbs R.R."/>
            <person name="Ganem D."/>
            <person name="Silverman R.H."/>
            <person name="DeRisi J.L."/>
        </authorList>
    </citation>
    <scope>RETRACTION NOTICE OF PUBMED:16609730</scope>
</reference>
<reference evidence="17 18 19" key="3">
    <citation type="journal article" date="2012" name="J. Struct. Biol.">
        <title>Crystal structures of the reverse transcriptase-associated ribonuclease H domain of xenotropic murine leukemia-virus related virus.</title>
        <authorList>
            <person name="Zhou D."/>
            <person name="Chung S."/>
            <person name="Miller M."/>
            <person name="Grice S.F."/>
            <person name="Wlodawer A."/>
        </authorList>
    </citation>
    <scope>X-RAY CRYSTALLOGRAPHY (1.88 ANGSTROMS) OF 1154-1328 IN COMPLEX WITH MN(2+) AND BETA-THUJAPLICINOL</scope>
    <scope>COFACTOR (REVERSE TRANSCRIPTASE/RIBONUCLEASE H P80)</scope>
</reference>
<accession>Q2F7J3</accession>
<feature type="initiator methionine" description="Removed; by host" evidence="1">
    <location>
        <position position="1"/>
    </location>
</feature>
<feature type="chain" id="PRO_0000390852" description="Gag-Pol polyprotein" evidence="1">
    <location>
        <begin position="2"/>
        <end position="1733"/>
    </location>
</feature>
<feature type="chain" id="PRO_0000390853" description="Matrix protein p15" evidence="1">
    <location>
        <begin position="2"/>
        <end position="129"/>
    </location>
</feature>
<feature type="chain" id="PRO_0000390854" description="RNA-binding phosphoprotein p12" evidence="1">
    <location>
        <begin position="130"/>
        <end position="213"/>
    </location>
</feature>
<feature type="chain" id="PRO_0000390855" description="Capsid protein p30" evidence="1">
    <location>
        <begin position="214"/>
        <end position="476"/>
    </location>
</feature>
<feature type="chain" id="PRO_0000390856" description="Nucleocapsid protein p10" evidence="1">
    <location>
        <begin position="477"/>
        <end position="532"/>
    </location>
</feature>
<feature type="chain" id="PRO_0000390857" description="Protease p14" evidence="1">
    <location>
        <begin position="533"/>
        <end position="657"/>
    </location>
</feature>
<feature type="chain" id="PRO_0000390858" description="Reverse transcriptase/ribonuclease H p80" evidence="1">
    <location>
        <begin position="658"/>
        <end position="1328"/>
    </location>
</feature>
<feature type="chain" id="PRO_0000390859" description="Integrase p46" evidence="1">
    <location>
        <begin position="1329"/>
        <end position="1733"/>
    </location>
</feature>
<feature type="domain" description="Peptidase A2" evidence="8">
    <location>
        <begin position="559"/>
        <end position="629"/>
    </location>
</feature>
<feature type="domain" description="Reverse transcriptase" evidence="9">
    <location>
        <begin position="739"/>
        <end position="930"/>
    </location>
</feature>
<feature type="domain" description="RNase H type-1" evidence="10">
    <location>
        <begin position="1172"/>
        <end position="1318"/>
    </location>
</feature>
<feature type="domain" description="Integrase catalytic" evidence="11">
    <location>
        <begin position="1442"/>
        <end position="1600"/>
    </location>
</feature>
<feature type="zinc finger region" description="CCHC-type" evidence="7">
    <location>
        <begin position="500"/>
        <end position="517"/>
    </location>
</feature>
<feature type="region of interest" description="Disordered" evidence="12">
    <location>
        <begin position="139"/>
        <end position="218"/>
    </location>
</feature>
<feature type="region of interest" description="Disordered" evidence="12">
    <location>
        <begin position="449"/>
        <end position="497"/>
    </location>
</feature>
<feature type="region of interest" description="Disordered" evidence="12">
    <location>
        <begin position="511"/>
        <end position="549"/>
    </location>
</feature>
<feature type="coiled-coil region" evidence="6">
    <location>
        <begin position="436"/>
        <end position="476"/>
    </location>
</feature>
<feature type="short sequence motif" description="PTAP/PSAP motif">
    <location>
        <begin position="109"/>
        <end position="112"/>
    </location>
</feature>
<feature type="short sequence motif" description="LYPX(n)L motif">
    <location>
        <begin position="128"/>
        <end position="132"/>
    </location>
</feature>
<feature type="short sequence motif" description="PPXY motif">
    <location>
        <begin position="161"/>
        <end position="164"/>
    </location>
</feature>
<feature type="compositionally biased region" description="Basic and acidic residues" evidence="12">
    <location>
        <begin position="449"/>
        <end position="464"/>
    </location>
</feature>
<feature type="compositionally biased region" description="Basic and acidic residues" evidence="12">
    <location>
        <begin position="484"/>
        <end position="497"/>
    </location>
</feature>
<feature type="compositionally biased region" description="Low complexity" evidence="12">
    <location>
        <begin position="526"/>
        <end position="535"/>
    </location>
</feature>
<feature type="active site" description="Protease; shared with dimeric partner" evidence="8">
    <location>
        <position position="564"/>
    </location>
</feature>
<feature type="binding site" evidence="2">
    <location>
        <position position="721"/>
    </location>
    <ligand>
        <name>RNA</name>
        <dbReference type="ChEBI" id="CHEBI:33697"/>
        <note>RNA template</note>
    </ligand>
</feature>
<feature type="binding site" evidence="2">
    <location>
        <position position="771"/>
    </location>
    <ligand>
        <name>RNA</name>
        <dbReference type="ChEBI" id="CHEBI:33697"/>
        <note>RNA template</note>
    </ligand>
</feature>
<feature type="binding site" evidence="2">
    <location>
        <position position="773"/>
    </location>
    <ligand>
        <name>RNA</name>
        <dbReference type="ChEBI" id="CHEBI:33697"/>
        <note>RNA template</note>
    </ligand>
</feature>
<feature type="binding site" evidence="2">
    <location>
        <position position="787"/>
    </location>
    <ligand>
        <name>RNA</name>
        <dbReference type="ChEBI" id="CHEBI:33697"/>
        <note>RNA template</note>
    </ligand>
</feature>
<feature type="binding site" evidence="1">
    <location>
        <position position="807"/>
    </location>
    <ligand>
        <name>Mg(2+)</name>
        <dbReference type="ChEBI" id="CHEBI:18420"/>
        <label>1</label>
        <note>catalytic; for reverse transcriptase activity</note>
    </ligand>
</feature>
<feature type="binding site" evidence="2">
    <location>
        <position position="851"/>
    </location>
    <ligand>
        <name>RNA</name>
        <dbReference type="ChEBI" id="CHEBI:33697"/>
        <note>RNA template</note>
    </ligand>
</feature>
<feature type="binding site" evidence="2">
    <location>
        <position position="853"/>
    </location>
    <ligand>
        <name>RNA</name>
        <dbReference type="ChEBI" id="CHEBI:33697"/>
        <note>RNA template</note>
    </ligand>
</feature>
<feature type="binding site" evidence="1">
    <location>
        <position position="881"/>
    </location>
    <ligand>
        <name>Mg(2+)</name>
        <dbReference type="ChEBI" id="CHEBI:18420"/>
        <label>1</label>
        <note>catalytic; for reverse transcriptase activity</note>
    </ligand>
</feature>
<feature type="binding site" evidence="1">
    <location>
        <position position="882"/>
    </location>
    <ligand>
        <name>Mg(2+)</name>
        <dbReference type="ChEBI" id="CHEBI:18420"/>
        <label>1</label>
        <note>catalytic; for reverse transcriptase activity</note>
    </ligand>
</feature>
<feature type="binding site" evidence="2">
    <location>
        <position position="941"/>
    </location>
    <ligand>
        <name>DNA</name>
        <dbReference type="ChEBI" id="CHEBI:16991"/>
        <note>DNA primer</note>
    </ligand>
</feature>
<feature type="binding site" evidence="2">
    <location>
        <position position="955"/>
    </location>
    <ligand>
        <name>DNA</name>
        <dbReference type="ChEBI" id="CHEBI:16991"/>
        <note>DNA primer</note>
    </ligand>
</feature>
<feature type="binding site" evidence="2">
    <location>
        <position position="958"/>
    </location>
    <ligand>
        <name>DNA</name>
        <dbReference type="ChEBI" id="CHEBI:16991"/>
        <note>DNA primer</note>
    </ligand>
</feature>
<feature type="binding site" evidence="2">
    <location>
        <position position="966"/>
    </location>
    <ligand>
        <name>DNA</name>
        <dbReference type="ChEBI" id="CHEBI:16991"/>
        <note>DNA primer</note>
    </ligand>
</feature>
<feature type="binding site" evidence="2">
    <location>
        <position position="1054"/>
    </location>
    <ligand>
        <name>RNA</name>
        <dbReference type="ChEBI" id="CHEBI:33697"/>
        <note>RNA template</note>
    </ligand>
</feature>
<feature type="binding site" evidence="2">
    <location>
        <position position="1055"/>
    </location>
    <ligand>
        <name>RNA</name>
        <dbReference type="ChEBI" id="CHEBI:33697"/>
        <note>RNA template</note>
    </ligand>
</feature>
<feature type="binding site" evidence="2">
    <location>
        <position position="1063"/>
    </location>
    <ligand>
        <name>DNA</name>
        <dbReference type="ChEBI" id="CHEBI:16991"/>
        <note>DNA primer</note>
    </ligand>
</feature>
<feature type="binding site" evidence="2">
    <location>
        <position position="1082"/>
    </location>
    <ligand>
        <name>RNA</name>
        <dbReference type="ChEBI" id="CHEBI:33697"/>
        <note>RNA template</note>
    </ligand>
</feature>
<feature type="binding site" evidence="2">
    <location>
        <position position="1113"/>
    </location>
    <ligand>
        <name>DNA</name>
        <dbReference type="ChEBI" id="CHEBI:16991"/>
        <note>DNA primer</note>
    </ligand>
</feature>
<feature type="binding site" evidence="10 13">
    <location>
        <position position="1181"/>
    </location>
    <ligand>
        <name>Mg(2+)</name>
        <dbReference type="ChEBI" id="CHEBI:18420"/>
        <label>2</label>
        <note>catalytic; for RNase H activity</note>
    </ligand>
</feature>
<feature type="binding site" evidence="10 13">
    <location>
        <position position="1181"/>
    </location>
    <ligand>
        <name>Mg(2+)</name>
        <dbReference type="ChEBI" id="CHEBI:18420"/>
        <label>3</label>
        <note>catalytic; for RNase H activity</note>
    </ligand>
</feature>
<feature type="binding site" evidence="2">
    <location>
        <position position="1184"/>
    </location>
    <ligand>
        <name>RNA</name>
        <dbReference type="ChEBI" id="CHEBI:33697"/>
        <note>RNA template</note>
    </ligand>
</feature>
<feature type="binding site" evidence="2">
    <location>
        <position position="1186"/>
    </location>
    <ligand>
        <name>RNA</name>
        <dbReference type="ChEBI" id="CHEBI:33697"/>
        <note>RNA template</note>
    </ligand>
</feature>
<feature type="binding site" evidence="2">
    <location>
        <position position="1187"/>
    </location>
    <ligand>
        <name>DNA</name>
        <dbReference type="ChEBI" id="CHEBI:16991"/>
        <note>DNA primer</note>
    </ligand>
</feature>
<feature type="binding site" evidence="2">
    <location>
        <position position="1214"/>
    </location>
    <ligand>
        <name>DNA</name>
        <dbReference type="ChEBI" id="CHEBI:16991"/>
        <note>DNA primer</note>
    </ligand>
</feature>
<feature type="binding site" evidence="2">
    <location>
        <position position="1216"/>
    </location>
    <ligand>
        <name>DNA</name>
        <dbReference type="ChEBI" id="CHEBI:16991"/>
        <note>DNA primer</note>
    </ligand>
</feature>
<feature type="binding site" evidence="10 13">
    <location>
        <position position="1219"/>
    </location>
    <ligand>
        <name>Mg(2+)</name>
        <dbReference type="ChEBI" id="CHEBI:18420"/>
        <label>3</label>
        <note>catalytic; for RNase H activity</note>
    </ligand>
</feature>
<feature type="binding site" evidence="10 13">
    <location>
        <position position="1240"/>
    </location>
    <ligand>
        <name>Mg(2+)</name>
        <dbReference type="ChEBI" id="CHEBI:18420"/>
        <label>3</label>
        <note>catalytic; for RNase H activity</note>
    </ligand>
</feature>
<feature type="binding site" evidence="2">
    <location>
        <position position="1242"/>
    </location>
    <ligand>
        <name>RNA</name>
        <dbReference type="ChEBI" id="CHEBI:33697"/>
        <note>RNA template</note>
    </ligand>
</feature>
<feature type="binding site" evidence="2">
    <location>
        <position position="1266"/>
    </location>
    <ligand>
        <name>RNA</name>
        <dbReference type="ChEBI" id="CHEBI:33697"/>
        <note>RNA template</note>
    </ligand>
</feature>
<feature type="binding site" evidence="10 13">
    <location>
        <position position="1310"/>
    </location>
    <ligand>
        <name>Mg(2+)</name>
        <dbReference type="ChEBI" id="CHEBI:18420"/>
        <label>2</label>
        <note>catalytic; for RNase H activity</note>
    </ligand>
</feature>
<feature type="binding site" evidence="1">
    <location>
        <position position="1453"/>
    </location>
    <ligand>
        <name>Mg(2+)</name>
        <dbReference type="ChEBI" id="CHEBI:18420"/>
        <label>4</label>
        <note>catalytic; for integrase activity</note>
    </ligand>
</feature>
<feature type="binding site" evidence="1">
    <location>
        <position position="1512"/>
    </location>
    <ligand>
        <name>Mg(2+)</name>
        <dbReference type="ChEBI" id="CHEBI:18420"/>
        <label>4</label>
        <note>catalytic; for integrase activity</note>
    </ligand>
</feature>
<feature type="site" description="Cleavage; by viral protease p14" evidence="1">
    <location>
        <begin position="129"/>
        <end position="130"/>
    </location>
</feature>
<feature type="site" description="Cleavage; by viral protease p14" evidence="1">
    <location>
        <begin position="213"/>
        <end position="214"/>
    </location>
</feature>
<feature type="site" description="Cleavage; by viral protease p14" evidence="1">
    <location>
        <begin position="476"/>
        <end position="477"/>
    </location>
</feature>
<feature type="site" description="Cleavage; by viral protease p14" evidence="1">
    <location>
        <begin position="532"/>
        <end position="533"/>
    </location>
</feature>
<feature type="site" description="Cleavage; by viral protease p14" evidence="1">
    <location>
        <begin position="657"/>
        <end position="658"/>
    </location>
</feature>
<feature type="site" description="Cleavage; by viral protease p14" evidence="1">
    <location>
        <begin position="1328"/>
        <end position="1329"/>
    </location>
</feature>
<feature type="modified residue" description="Phosphoserine; by host" evidence="1">
    <location>
        <position position="190"/>
    </location>
</feature>
<feature type="lipid moiety-binding region" description="N-myristoyl glycine; by host" evidence="1">
    <location>
        <position position="2"/>
    </location>
</feature>
<feature type="strand" evidence="20">
    <location>
        <begin position="1167"/>
        <end position="1169"/>
    </location>
</feature>
<feature type="strand" evidence="20">
    <location>
        <begin position="1175"/>
        <end position="1186"/>
    </location>
</feature>
<feature type="strand" evidence="20">
    <location>
        <begin position="1188"/>
        <end position="1198"/>
    </location>
</feature>
<feature type="strand" evidence="20">
    <location>
        <begin position="1200"/>
        <end position="1209"/>
    </location>
</feature>
<feature type="helix" evidence="20">
    <location>
        <begin position="1215"/>
        <end position="1229"/>
    </location>
</feature>
<feature type="turn" evidence="20">
    <location>
        <begin position="1230"/>
        <end position="1232"/>
    </location>
</feature>
<feature type="strand" evidence="20">
    <location>
        <begin position="1233"/>
        <end position="1240"/>
    </location>
</feature>
<feature type="helix" evidence="20">
    <location>
        <begin position="1242"/>
        <end position="1249"/>
    </location>
</feature>
<feature type="helix" evidence="20">
    <location>
        <begin position="1251"/>
        <end position="1257"/>
    </location>
</feature>
<feature type="strand" evidence="20">
    <location>
        <begin position="1261"/>
        <end position="1264"/>
    </location>
</feature>
<feature type="strand" evidence="21">
    <location>
        <begin position="1268"/>
        <end position="1270"/>
    </location>
</feature>
<feature type="helix" evidence="20">
    <location>
        <begin position="1271"/>
        <end position="1280"/>
    </location>
</feature>
<feature type="strand" evidence="20">
    <location>
        <begin position="1283"/>
        <end position="1291"/>
    </location>
</feature>
<feature type="helix" evidence="20">
    <location>
        <begin position="1301"/>
        <end position="1322"/>
    </location>
</feature>